<gene>
    <name evidence="1" type="primary">mt-atp8</name>
    <name type="synonym">atp8</name>
    <name type="synonym">atpase8</name>
    <name type="synonym">mtatp8</name>
</gene>
<evidence type="ECO:0000250" key="1">
    <source>
        <dbReference type="UniProtKB" id="P03928"/>
    </source>
</evidence>
<evidence type="ECO:0000250" key="2">
    <source>
        <dbReference type="UniProtKB" id="P19483"/>
    </source>
</evidence>
<evidence type="ECO:0000255" key="3"/>
<evidence type="ECO:0000256" key="4">
    <source>
        <dbReference type="SAM" id="MobiDB-lite"/>
    </source>
</evidence>
<evidence type="ECO:0000305" key="5"/>
<accession>P15996</accession>
<dbReference type="EMBL" id="X17659">
    <property type="protein sequence ID" value="CAA35655.1"/>
    <property type="molecule type" value="Genomic_DNA"/>
</dbReference>
<dbReference type="EMBL" id="X99772">
    <property type="protein sequence ID" value="CAA68110.1"/>
    <property type="molecule type" value="Genomic_DNA"/>
</dbReference>
<dbReference type="PIR" id="S08424">
    <property type="entry name" value="S08424"/>
</dbReference>
<dbReference type="RefSeq" id="NP_008617.1">
    <property type="nucleotide sequence ID" value="NC_002081.1"/>
</dbReference>
<dbReference type="SMR" id="P15996"/>
<dbReference type="GeneID" id="808453"/>
<dbReference type="CTD" id="4509"/>
<dbReference type="OrthoDB" id="8734014at2759"/>
<dbReference type="Proteomes" id="UP000694546">
    <property type="component" value="Unplaced"/>
</dbReference>
<dbReference type="GO" id="GO:0031966">
    <property type="term" value="C:mitochondrial membrane"/>
    <property type="evidence" value="ECO:0007669"/>
    <property type="project" value="UniProtKB-SubCell"/>
</dbReference>
<dbReference type="GO" id="GO:0045259">
    <property type="term" value="C:proton-transporting ATP synthase complex"/>
    <property type="evidence" value="ECO:0007669"/>
    <property type="project" value="UniProtKB-KW"/>
</dbReference>
<dbReference type="GO" id="GO:0015078">
    <property type="term" value="F:proton transmembrane transporter activity"/>
    <property type="evidence" value="ECO:0007669"/>
    <property type="project" value="InterPro"/>
</dbReference>
<dbReference type="GO" id="GO:0015986">
    <property type="term" value="P:proton motive force-driven ATP synthesis"/>
    <property type="evidence" value="ECO:0007669"/>
    <property type="project" value="InterPro"/>
</dbReference>
<dbReference type="InterPro" id="IPR001421">
    <property type="entry name" value="ATP8_metazoa"/>
</dbReference>
<dbReference type="InterPro" id="IPR050635">
    <property type="entry name" value="ATPase_protein_8"/>
</dbReference>
<dbReference type="PANTHER" id="PTHR39937">
    <property type="entry name" value="ATP SYNTHASE PROTEIN 8"/>
    <property type="match status" value="1"/>
</dbReference>
<dbReference type="PANTHER" id="PTHR39937:SF1">
    <property type="entry name" value="ATP SYNTHASE PROTEIN 8"/>
    <property type="match status" value="1"/>
</dbReference>
<dbReference type="Pfam" id="PF00895">
    <property type="entry name" value="ATP-synt_8"/>
    <property type="match status" value="1"/>
</dbReference>
<comment type="function">
    <text evidence="1 2">Subunit 8, of the mitochondrial membrane ATP synthase complex (F(1)F(0) ATP synthase or Complex V) that produces ATP from ADP in the presence of a proton gradient across the membrane which is generated by electron transport complexes of the respiratory chain. ATP synthase complex consist of a soluble F(1) head domain - the catalytic core - and a membrane F(1) domain - the membrane proton channel. These two domains are linked by a central stalk rotating inside the F(1) region and a stationary peripheral stalk. During catalysis, ATP synthesis in the catalytic domain of F(1) is coupled via a rotary mechanism of the central stalk subunits to proton translocation (By similarity). In vivo, can only synthesize ATP although its ATP hydrolase activity can be activated artificially in vitro (By similarity). Part of the complex F(0) domain (By similarity).</text>
</comment>
<comment type="subunit">
    <text evidence="1">Component of the ATP synthase complex composed at least of ATP5F1A/subunit alpha, ATP5F1B/subunit beta, ATP5MC1/subunit c (homooctomer), MT-ATP6/subunit a, MT-ATP8/subunit 8, ATP5ME/subunit e, ATP5MF/subunit f, ATP5MG/subunit g, ATP5MK/subunit k, ATP5MJ/subunit j, ATP5F1C/subunit gamma, ATP5F1D/subunit delta, ATP5F1E/subunit epsilon, ATP5PF/subunit F6, ATP5PB/subunit b, ATP5PD/subunit d, ATP5PO/subunit OSCP. ATP synthase complex consists of a soluble F(1) head domain (subunits alpha(3) and beta(3)) - the catalytic core - and a membrane F(0) domain - the membrane proton channel (subunits c, a, 8, e, f, g, k and j). These two domains are linked by a central stalk (subunits gamma, delta, and epsilon) rotating inside the F1 region and a stationary peripheral stalk (subunits F6, b, d, and OSCP).</text>
</comment>
<comment type="subcellular location">
    <subcellularLocation>
        <location>Mitochondrion membrane</location>
        <topology>Single-pass membrane protein</topology>
    </subcellularLocation>
</comment>
<comment type="similarity">
    <text evidence="5">Belongs to the ATPase protein 8 family.</text>
</comment>
<geneLocation type="mitochondrion"/>
<proteinExistence type="inferred from homology"/>
<keyword id="KW-0066">ATP synthesis</keyword>
<keyword id="KW-0138">CF(0)</keyword>
<keyword id="KW-0375">Hydrogen ion transport</keyword>
<keyword id="KW-0406">Ion transport</keyword>
<keyword id="KW-0472">Membrane</keyword>
<keyword id="KW-0496">Mitochondrion</keyword>
<keyword id="KW-1185">Reference proteome</keyword>
<keyword id="KW-0812">Transmembrane</keyword>
<keyword id="KW-1133">Transmembrane helix</keyword>
<keyword id="KW-0813">Transport</keyword>
<reference key="1">
    <citation type="journal article" date="1990" name="Nucleic Acids Res.">
        <title>Organization of the mitochondrial genome of Atlantic cod, Gadus morhua.</title>
        <authorList>
            <person name="Johansen S."/>
            <person name="Guddal P.H."/>
            <person name="Johansen T."/>
        </authorList>
    </citation>
    <scope>NUCLEOTIDE SEQUENCE [GENOMIC DNA]</scope>
    <source>
        <strain>Norwegian coastal 1</strain>
        <tissue>Liver</tissue>
    </source>
</reference>
<reference key="2">
    <citation type="journal article" date="1996" name="Mol. Mar. Biol. Biotechnol.">
        <title>The complete mitochondrial DNA sequence of Atlantic cod (Gadus morhua): relevance to taxonomic studies among codfishes.</title>
        <authorList>
            <person name="Johansen S."/>
            <person name="Bakke I."/>
        </authorList>
    </citation>
    <scope>NUCLEOTIDE SEQUENCE [GENOMIC DNA]</scope>
    <source>
        <strain>Norwegian coastal 1</strain>
    </source>
</reference>
<sequence>MPQLNPAPWFMIFMFTWAIFLTILPPKVMAHTFPNEPSPQGMTTPKTAPWNWPWH</sequence>
<feature type="chain" id="PRO_0000195530" description="ATP synthase F(0) complex subunit 8">
    <location>
        <begin position="1"/>
        <end position="55"/>
    </location>
</feature>
<feature type="transmembrane region" description="Helical" evidence="3">
    <location>
        <begin position="4"/>
        <end position="24"/>
    </location>
</feature>
<feature type="region of interest" description="Disordered" evidence="4">
    <location>
        <begin position="34"/>
        <end position="55"/>
    </location>
</feature>
<protein>
    <recommendedName>
        <fullName evidence="1">ATP synthase F(0) complex subunit 8</fullName>
    </recommendedName>
    <alternativeName>
        <fullName>A6L</fullName>
    </alternativeName>
    <alternativeName>
        <fullName>F-ATPase subunit 8</fullName>
    </alternativeName>
</protein>
<organism>
    <name type="scientific">Gadus morhua</name>
    <name type="common">Atlantic cod</name>
    <dbReference type="NCBI Taxonomy" id="8049"/>
    <lineage>
        <taxon>Eukaryota</taxon>
        <taxon>Metazoa</taxon>
        <taxon>Chordata</taxon>
        <taxon>Craniata</taxon>
        <taxon>Vertebrata</taxon>
        <taxon>Euteleostomi</taxon>
        <taxon>Actinopterygii</taxon>
        <taxon>Neopterygii</taxon>
        <taxon>Teleostei</taxon>
        <taxon>Neoteleostei</taxon>
        <taxon>Acanthomorphata</taxon>
        <taxon>Zeiogadaria</taxon>
        <taxon>Gadariae</taxon>
        <taxon>Gadiformes</taxon>
        <taxon>Gadoidei</taxon>
        <taxon>Gadidae</taxon>
        <taxon>Gadus</taxon>
    </lineage>
</organism>
<name>ATP8_GADMO</name>